<accession>Q5B297</accession>
<accession>C8VGU4</accession>
<name>PLYC_EMENI</name>
<sequence>MQPLHTLLALLPLCRSTTALLAFPGAEGFGANAVGGRGGDVYVVTNLEDSGEGSLRDAVSETDRIVVFAVGGVINIEDRLVVSKRVTILGQTAPGDGITVYGNGWSFSNADDAIVRYIRVRMGRGGDSGKDGITIAEGSNMIFDHVSVSWGRDETFSISGTAENITVQDSIIAQGLETHSCGGLMQTDGGVSLFRNLYIDNKTRNPKVKGVNEFTNNVVYNWGGGGGYIAGDSSGQSFGNYFISGPSTSVTAFTRGNENFHGYVENNYYDPDQDGTLNGNELGVSSSNYGGMDIVDTKYDYPAAQYIMTPDEAVSYVTENVGASLVRDGVDSNLIDQVLSYGTDGALISDEDDFGGVGDLDGGETPTDTDGDGIPDDVETQLGTDPNIADSTEIDSSTGYSWLEVWANSLVPEGYASTRKC</sequence>
<organism>
    <name type="scientific">Emericella nidulans (strain FGSC A4 / ATCC 38163 / CBS 112.46 / NRRL 194 / M139)</name>
    <name type="common">Aspergillus nidulans</name>
    <dbReference type="NCBI Taxonomy" id="227321"/>
    <lineage>
        <taxon>Eukaryota</taxon>
        <taxon>Fungi</taxon>
        <taxon>Dikarya</taxon>
        <taxon>Ascomycota</taxon>
        <taxon>Pezizomycotina</taxon>
        <taxon>Eurotiomycetes</taxon>
        <taxon>Eurotiomycetidae</taxon>
        <taxon>Eurotiales</taxon>
        <taxon>Aspergillaceae</taxon>
        <taxon>Aspergillus</taxon>
        <taxon>Aspergillus subgen. Nidulantes</taxon>
    </lineage>
</organism>
<gene>
    <name type="primary">plyC</name>
    <name type="ORF">AN5333</name>
</gene>
<dbReference type="EC" id="4.2.2.2"/>
<dbReference type="EMBL" id="AACD01000093">
    <property type="protein sequence ID" value="EAA62493.1"/>
    <property type="molecule type" value="Genomic_DNA"/>
</dbReference>
<dbReference type="EMBL" id="BN001305">
    <property type="protein sequence ID" value="CBF82085.1"/>
    <property type="molecule type" value="Genomic_DNA"/>
</dbReference>
<dbReference type="RefSeq" id="XP_662937.1">
    <property type="nucleotide sequence ID" value="XM_657845.1"/>
</dbReference>
<dbReference type="SMR" id="Q5B297"/>
<dbReference type="CAZy" id="PL1">
    <property type="family name" value="Polysaccharide Lyase Family 1"/>
</dbReference>
<dbReference type="GlyCosmos" id="Q5B297">
    <property type="glycosylation" value="2 sites, No reported glycans"/>
</dbReference>
<dbReference type="EnsemblFungi" id="CBF82085">
    <property type="protein sequence ID" value="CBF82085"/>
    <property type="gene ID" value="ANIA_05333"/>
</dbReference>
<dbReference type="KEGG" id="ani:ANIA_05333"/>
<dbReference type="eggNOG" id="ENOG502QW7I">
    <property type="taxonomic scope" value="Eukaryota"/>
</dbReference>
<dbReference type="HOGENOM" id="CLU_016764_1_1_1"/>
<dbReference type="InParanoid" id="Q5B297"/>
<dbReference type="OMA" id="GIHSMGT"/>
<dbReference type="OrthoDB" id="302705at2759"/>
<dbReference type="Proteomes" id="UP000000560">
    <property type="component" value="Chromosome V"/>
</dbReference>
<dbReference type="GO" id="GO:0005576">
    <property type="term" value="C:extracellular region"/>
    <property type="evidence" value="ECO:0007669"/>
    <property type="project" value="UniProtKB-SubCell"/>
</dbReference>
<dbReference type="GO" id="GO:0046872">
    <property type="term" value="F:metal ion binding"/>
    <property type="evidence" value="ECO:0007669"/>
    <property type="project" value="UniProtKB-KW"/>
</dbReference>
<dbReference type="GO" id="GO:0030570">
    <property type="term" value="F:pectate lyase activity"/>
    <property type="evidence" value="ECO:0007669"/>
    <property type="project" value="UniProtKB-EC"/>
</dbReference>
<dbReference type="GO" id="GO:0071555">
    <property type="term" value="P:cell wall organization"/>
    <property type="evidence" value="ECO:0007669"/>
    <property type="project" value="UniProtKB-KW"/>
</dbReference>
<dbReference type="GO" id="GO:0000272">
    <property type="term" value="P:polysaccharide catabolic process"/>
    <property type="evidence" value="ECO:0007669"/>
    <property type="project" value="UniProtKB-KW"/>
</dbReference>
<dbReference type="Gene3D" id="2.160.20.10">
    <property type="entry name" value="Single-stranded right-handed beta-helix, Pectin lyase-like"/>
    <property type="match status" value="1"/>
</dbReference>
<dbReference type="InterPro" id="IPR018247">
    <property type="entry name" value="EF_Hand_1_Ca_BS"/>
</dbReference>
<dbReference type="InterPro" id="IPR012334">
    <property type="entry name" value="Pectin_lyas_fold"/>
</dbReference>
<dbReference type="InterPro" id="IPR011050">
    <property type="entry name" value="Pectin_lyase_fold/virulence"/>
</dbReference>
<dbReference type="InterPro" id="IPR052063">
    <property type="entry name" value="Polysaccharide_Lyase_1"/>
</dbReference>
<dbReference type="PANTHER" id="PTHR42970">
    <property type="entry name" value="PECTATE LYASE C-RELATED"/>
    <property type="match status" value="1"/>
</dbReference>
<dbReference type="PANTHER" id="PTHR42970:SF1">
    <property type="entry name" value="PECTATE LYASE C-RELATED"/>
    <property type="match status" value="1"/>
</dbReference>
<dbReference type="Pfam" id="PF18884">
    <property type="entry name" value="TSP3_bac"/>
    <property type="match status" value="1"/>
</dbReference>
<dbReference type="SUPFAM" id="SSF51126">
    <property type="entry name" value="Pectin lyase-like"/>
    <property type="match status" value="1"/>
</dbReference>
<dbReference type="PROSITE" id="PS00018">
    <property type="entry name" value="EF_HAND_1"/>
    <property type="match status" value="1"/>
</dbReference>
<feature type="signal peptide" evidence="2">
    <location>
        <begin position="1"/>
        <end position="19"/>
    </location>
</feature>
<feature type="chain" id="PRO_0000394573" description="Probable pectate lyase C">
    <location>
        <begin position="20"/>
        <end position="421"/>
    </location>
</feature>
<feature type="domain" description="EF-hand">
    <location>
        <begin position="257"/>
        <end position="292"/>
    </location>
</feature>
<feature type="region of interest" description="Disordered" evidence="4">
    <location>
        <begin position="353"/>
        <end position="376"/>
    </location>
</feature>
<feature type="compositionally biased region" description="Acidic residues" evidence="4">
    <location>
        <begin position="367"/>
        <end position="376"/>
    </location>
</feature>
<feature type="active site" evidence="2">
    <location>
        <position position="204"/>
    </location>
</feature>
<feature type="binding site" evidence="3">
    <location>
        <position position="270"/>
    </location>
    <ligand>
        <name>Ca(2+)</name>
        <dbReference type="ChEBI" id="CHEBI:29108"/>
    </ligand>
</feature>
<feature type="binding site" evidence="3">
    <location>
        <position position="272"/>
    </location>
    <ligand>
        <name>Ca(2+)</name>
        <dbReference type="ChEBI" id="CHEBI:29108"/>
    </ligand>
</feature>
<feature type="binding site" evidence="3">
    <location>
        <position position="274"/>
    </location>
    <ligand>
        <name>Ca(2+)</name>
        <dbReference type="ChEBI" id="CHEBI:29108"/>
    </ligand>
</feature>
<feature type="binding site" evidence="3">
    <location>
        <position position="276"/>
    </location>
    <ligand>
        <name>Ca(2+)</name>
        <dbReference type="ChEBI" id="CHEBI:29108"/>
    </ligand>
</feature>
<feature type="binding site" evidence="3">
    <location>
        <position position="281"/>
    </location>
    <ligand>
        <name>Ca(2+)</name>
        <dbReference type="ChEBI" id="CHEBI:29108"/>
    </ligand>
</feature>
<feature type="glycosylation site" description="N-linked (GlcNAc...) asparagine" evidence="2">
    <location>
        <position position="164"/>
    </location>
</feature>
<feature type="glycosylation site" description="N-linked (GlcNAc...) asparagine" evidence="2">
    <location>
        <position position="201"/>
    </location>
</feature>
<proteinExistence type="inferred from homology"/>
<reference key="1">
    <citation type="journal article" date="2005" name="Nature">
        <title>Sequencing of Aspergillus nidulans and comparative analysis with A. fumigatus and A. oryzae.</title>
        <authorList>
            <person name="Galagan J.E."/>
            <person name="Calvo S.E."/>
            <person name="Cuomo C."/>
            <person name="Ma L.-J."/>
            <person name="Wortman J.R."/>
            <person name="Batzoglou S."/>
            <person name="Lee S.-I."/>
            <person name="Bastuerkmen M."/>
            <person name="Spevak C.C."/>
            <person name="Clutterbuck J."/>
            <person name="Kapitonov V."/>
            <person name="Jurka J."/>
            <person name="Scazzocchio C."/>
            <person name="Farman M.L."/>
            <person name="Butler J."/>
            <person name="Purcell S."/>
            <person name="Harris S."/>
            <person name="Braus G.H."/>
            <person name="Draht O."/>
            <person name="Busch S."/>
            <person name="D'Enfert C."/>
            <person name="Bouchier C."/>
            <person name="Goldman G.H."/>
            <person name="Bell-Pedersen D."/>
            <person name="Griffiths-Jones S."/>
            <person name="Doonan J.H."/>
            <person name="Yu J."/>
            <person name="Vienken K."/>
            <person name="Pain A."/>
            <person name="Freitag M."/>
            <person name="Selker E.U."/>
            <person name="Archer D.B."/>
            <person name="Penalva M.A."/>
            <person name="Oakley B.R."/>
            <person name="Momany M."/>
            <person name="Tanaka T."/>
            <person name="Kumagai T."/>
            <person name="Asai K."/>
            <person name="Machida M."/>
            <person name="Nierman W.C."/>
            <person name="Denning D.W."/>
            <person name="Caddick M.X."/>
            <person name="Hynes M."/>
            <person name="Paoletti M."/>
            <person name="Fischer R."/>
            <person name="Miller B.L."/>
            <person name="Dyer P.S."/>
            <person name="Sachs M.S."/>
            <person name="Osmani S.A."/>
            <person name="Birren B.W."/>
        </authorList>
    </citation>
    <scope>NUCLEOTIDE SEQUENCE [LARGE SCALE GENOMIC DNA]</scope>
    <source>
        <strain>FGSC A4 / ATCC 38163 / CBS 112.46 / NRRL 194 / M139</strain>
    </source>
</reference>
<reference key="2">
    <citation type="journal article" date="2009" name="Fungal Genet. Biol.">
        <title>The 2008 update of the Aspergillus nidulans genome annotation: a community effort.</title>
        <authorList>
            <person name="Wortman J.R."/>
            <person name="Gilsenan J.M."/>
            <person name="Joardar V."/>
            <person name="Deegan J."/>
            <person name="Clutterbuck J."/>
            <person name="Andersen M.R."/>
            <person name="Archer D."/>
            <person name="Bencina M."/>
            <person name="Braus G."/>
            <person name="Coutinho P."/>
            <person name="von Dohren H."/>
            <person name="Doonan J."/>
            <person name="Driessen A.J."/>
            <person name="Durek P."/>
            <person name="Espeso E."/>
            <person name="Fekete E."/>
            <person name="Flipphi M."/>
            <person name="Estrada C.G."/>
            <person name="Geysens S."/>
            <person name="Goldman G."/>
            <person name="de Groot P.W."/>
            <person name="Hansen K."/>
            <person name="Harris S.D."/>
            <person name="Heinekamp T."/>
            <person name="Helmstaedt K."/>
            <person name="Henrissat B."/>
            <person name="Hofmann G."/>
            <person name="Homan T."/>
            <person name="Horio T."/>
            <person name="Horiuchi H."/>
            <person name="James S."/>
            <person name="Jones M."/>
            <person name="Karaffa L."/>
            <person name="Karanyi Z."/>
            <person name="Kato M."/>
            <person name="Keller N."/>
            <person name="Kelly D.E."/>
            <person name="Kiel J.A."/>
            <person name="Kim J.M."/>
            <person name="van der Klei I.J."/>
            <person name="Klis F.M."/>
            <person name="Kovalchuk A."/>
            <person name="Krasevec N."/>
            <person name="Kubicek C.P."/>
            <person name="Liu B."/>
            <person name="Maccabe A."/>
            <person name="Meyer V."/>
            <person name="Mirabito P."/>
            <person name="Miskei M."/>
            <person name="Mos M."/>
            <person name="Mullins J."/>
            <person name="Nelson D.R."/>
            <person name="Nielsen J."/>
            <person name="Oakley B.R."/>
            <person name="Osmani S.A."/>
            <person name="Pakula T."/>
            <person name="Paszewski A."/>
            <person name="Paulsen I."/>
            <person name="Pilsyk S."/>
            <person name="Pocsi I."/>
            <person name="Punt P.J."/>
            <person name="Ram A.F."/>
            <person name="Ren Q."/>
            <person name="Robellet X."/>
            <person name="Robson G."/>
            <person name="Seiboth B."/>
            <person name="van Solingen P."/>
            <person name="Specht T."/>
            <person name="Sun J."/>
            <person name="Taheri-Talesh N."/>
            <person name="Takeshita N."/>
            <person name="Ussery D."/>
            <person name="vanKuyk P.A."/>
            <person name="Visser H."/>
            <person name="van de Vondervoort P.J."/>
            <person name="de Vries R.P."/>
            <person name="Walton J."/>
            <person name="Xiang X."/>
            <person name="Xiong Y."/>
            <person name="Zeng A.P."/>
            <person name="Brandt B.W."/>
            <person name="Cornell M.J."/>
            <person name="van den Hondel C.A."/>
            <person name="Visser J."/>
            <person name="Oliver S.G."/>
            <person name="Turner G."/>
        </authorList>
    </citation>
    <scope>GENOME REANNOTATION</scope>
    <source>
        <strain>FGSC A4 / ATCC 38163 / CBS 112.46 / NRRL 194 / M139</strain>
    </source>
</reference>
<evidence type="ECO:0000250" key="1"/>
<evidence type="ECO:0000255" key="2"/>
<evidence type="ECO:0000255" key="3">
    <source>
        <dbReference type="PROSITE-ProRule" id="PRU10142"/>
    </source>
</evidence>
<evidence type="ECO:0000256" key="4">
    <source>
        <dbReference type="SAM" id="MobiDB-lite"/>
    </source>
</evidence>
<evidence type="ECO:0000305" key="5"/>
<comment type="function">
    <text evidence="1">Pectinolytic enzyme consist of four classes of enzymes: pectin lyase, polygalacturonase, pectin methylesterase and rhamnogalacturonase. Among pectinolytic enzymes, pectin lyase is the most important in depolymerization of pectin, since it cleaves internal glycosidic bonds of highly methylated pectins. Favors pectate, the anion, over pectin, the methyl ester (By similarity).</text>
</comment>
<comment type="catalytic activity">
    <reaction>
        <text>Eliminative cleavage of (1-&gt;4)-alpha-D-galacturonan to give oligosaccharides with 4-deoxy-alpha-D-galact-4-enuronosyl groups at their non-reducing ends.</text>
        <dbReference type="EC" id="4.2.2.2"/>
    </reaction>
</comment>
<comment type="cofactor">
    <cofactor evidence="1">
        <name>Ca(2+)</name>
        <dbReference type="ChEBI" id="CHEBI:29108"/>
    </cofactor>
    <text evidence="1">Binds 1 Ca(2+) ion per subunit.</text>
</comment>
<comment type="subcellular location">
    <subcellularLocation>
        <location evidence="1">Secreted</location>
    </subcellularLocation>
</comment>
<comment type="similarity">
    <text evidence="5">Belongs to the polysaccharide lyase 1 family.</text>
</comment>
<protein>
    <recommendedName>
        <fullName>Probable pectate lyase C</fullName>
        <ecNumber>4.2.2.2</ecNumber>
    </recommendedName>
</protein>
<keyword id="KW-0106">Calcium</keyword>
<keyword id="KW-0119">Carbohydrate metabolism</keyword>
<keyword id="KW-0961">Cell wall biogenesis/degradation</keyword>
<keyword id="KW-0325">Glycoprotein</keyword>
<keyword id="KW-0456">Lyase</keyword>
<keyword id="KW-0479">Metal-binding</keyword>
<keyword id="KW-0624">Polysaccharide degradation</keyword>
<keyword id="KW-1185">Reference proteome</keyword>
<keyword id="KW-0964">Secreted</keyword>
<keyword id="KW-0732">Signal</keyword>